<comment type="function">
    <text evidence="5 6 7">Water channel required to facilitate the transport of water across membranes (PubMed:25323307, PubMed:25857333). Also mediates the transport nitric oxide, hydrogen peroxide and carbon dioxide across the membrane (PubMed:25857333). Required for Hartig net development in trembling aspen trees (PubMed:25857333). Contributes in fungal cellular processes during the basidiocarp formation (PubMed:25957233).</text>
</comment>
<comment type="catalytic activity">
    <reaction evidence="5">
        <text>H2O(in) = H2O(out)</text>
        <dbReference type="Rhea" id="RHEA:29667"/>
        <dbReference type="ChEBI" id="CHEBI:15377"/>
    </reaction>
</comment>
<comment type="catalytic activity">
    <reaction evidence="6">
        <text>H2O2(out) = H2O2(in)</text>
        <dbReference type="Rhea" id="RHEA:74375"/>
        <dbReference type="ChEBI" id="CHEBI:16240"/>
    </reaction>
</comment>
<comment type="catalytic activity">
    <reaction evidence="6">
        <text>nitric oxide(out) = nitric oxide(in)</text>
        <dbReference type="Rhea" id="RHEA:74895"/>
        <dbReference type="ChEBI" id="CHEBI:16480"/>
    </reaction>
</comment>
<comment type="catalytic activity">
    <reaction evidence="6">
        <text>CO2(out) = CO2(in)</text>
        <dbReference type="Rhea" id="RHEA:74891"/>
        <dbReference type="ChEBI" id="CHEBI:16526"/>
    </reaction>
</comment>
<comment type="subcellular location">
    <subcellularLocation>
        <location evidence="10">Cell membrane</location>
        <topology evidence="2">Multi-pass membrane protein</topology>
    </subcellularLocation>
</comment>
<comment type="induction">
    <text evidence="6 7">Expression is 700-fold higher in the hyphae within the root than in the free-living mycelium after 24h of direct interaction with the roots (PubMed:25857333). Expression is low in vegetative mycelia and highly up-regulated during development of the basidiocarp (PubMed:25957233).</text>
</comment>
<comment type="domain">
    <text evidence="1">Aquaporins contain two tandem repeats each containing three membrane-spanning domains and a pore-forming loop with the signature motif Asn-Pro-Ala (NPA) (By similarity). AQP1 has NPN/NSA motifs which is in accordance with the fungal aquaporins (NPx and NxA) (By similarity).</text>
</comment>
<comment type="disruption phenotype">
    <text evidence="6">Impairs the mycorrhizal structure development.</text>
</comment>
<comment type="similarity">
    <text evidence="9">Belongs to the MIP/aquaporin (TC 1.A.8) family.</text>
</comment>
<evidence type="ECO:0000250" key="1">
    <source>
        <dbReference type="UniProtKB" id="B0DMR6"/>
    </source>
</evidence>
<evidence type="ECO:0000255" key="2"/>
<evidence type="ECO:0000255" key="3">
    <source>
        <dbReference type="PROSITE-ProRule" id="PRU00498"/>
    </source>
</evidence>
<evidence type="ECO:0000256" key="4">
    <source>
        <dbReference type="SAM" id="MobiDB-lite"/>
    </source>
</evidence>
<evidence type="ECO:0000269" key="5">
    <source>
    </source>
</evidence>
<evidence type="ECO:0000269" key="6">
    <source>
    </source>
</evidence>
<evidence type="ECO:0000269" key="7">
    <source>
    </source>
</evidence>
<evidence type="ECO:0000303" key="8">
    <source>
    </source>
</evidence>
<evidence type="ECO:0000305" key="9"/>
<evidence type="ECO:0000305" key="10">
    <source>
    </source>
</evidence>
<protein>
    <recommendedName>
        <fullName evidence="8">Aquaporin-1</fullName>
    </recommendedName>
</protein>
<organism>
    <name type="scientific">Laccaria bicolor</name>
    <name type="common">Bicoloured deceiver</name>
    <name type="synonym">Laccaria laccata var. bicolor</name>
    <dbReference type="NCBI Taxonomy" id="29883"/>
    <lineage>
        <taxon>Eukaryota</taxon>
        <taxon>Fungi</taxon>
        <taxon>Dikarya</taxon>
        <taxon>Basidiomycota</taxon>
        <taxon>Agaricomycotina</taxon>
        <taxon>Agaricomycetes</taxon>
        <taxon>Agaricomycetidae</taxon>
        <taxon>Agaricales</taxon>
        <taxon>Agaricineae</taxon>
        <taxon>Hydnangiaceae</taxon>
        <taxon>Laccaria</taxon>
    </lineage>
</organism>
<proteinExistence type="evidence at transcript level"/>
<dbReference type="EMBL" id="JQ585592">
    <property type="protein sequence ID" value="AFJ15555.1"/>
    <property type="molecule type" value="mRNA"/>
</dbReference>
<dbReference type="SMR" id="I1Z8E5"/>
<dbReference type="GO" id="GO:0005886">
    <property type="term" value="C:plasma membrane"/>
    <property type="evidence" value="ECO:0007669"/>
    <property type="project" value="UniProtKB-SubCell"/>
</dbReference>
<dbReference type="GO" id="GO:0015250">
    <property type="term" value="F:water channel activity"/>
    <property type="evidence" value="ECO:0007669"/>
    <property type="project" value="TreeGrafter"/>
</dbReference>
<dbReference type="FunFam" id="1.20.1080.10:FF:000014">
    <property type="entry name" value="Aquaporin 1"/>
    <property type="match status" value="1"/>
</dbReference>
<dbReference type="Gene3D" id="1.20.1080.10">
    <property type="entry name" value="Glycerol uptake facilitator protein"/>
    <property type="match status" value="1"/>
</dbReference>
<dbReference type="InterPro" id="IPR023271">
    <property type="entry name" value="Aquaporin-like"/>
</dbReference>
<dbReference type="InterPro" id="IPR034294">
    <property type="entry name" value="Aquaporin_transptr"/>
</dbReference>
<dbReference type="InterPro" id="IPR000425">
    <property type="entry name" value="MIP"/>
</dbReference>
<dbReference type="PANTHER" id="PTHR19139">
    <property type="entry name" value="AQUAPORIN TRANSPORTER"/>
    <property type="match status" value="1"/>
</dbReference>
<dbReference type="PANTHER" id="PTHR19139:SF199">
    <property type="entry name" value="MIP17260P"/>
    <property type="match status" value="1"/>
</dbReference>
<dbReference type="Pfam" id="PF00230">
    <property type="entry name" value="MIP"/>
    <property type="match status" value="1"/>
</dbReference>
<dbReference type="PRINTS" id="PR00783">
    <property type="entry name" value="MINTRINSICP"/>
</dbReference>
<dbReference type="SUPFAM" id="SSF81338">
    <property type="entry name" value="Aquaporin-like"/>
    <property type="match status" value="1"/>
</dbReference>
<reference key="1">
    <citation type="journal article" date="2015" name="New Phytol.">
        <title>Overexpression of Laccaria bicolor aquaporin JQ585595 alters root water transport properties in ectomycorrhizal white spruce (Picea glauca) seedlings.</title>
        <authorList>
            <person name="Xu H."/>
            <person name="Kemppainen M."/>
            <person name="El Kayal W."/>
            <person name="Lee S.H."/>
            <person name="Pardo A.G."/>
            <person name="Cooke J.E."/>
            <person name="Zwiazek J.J."/>
        </authorList>
    </citation>
    <scope>NUCLEOTIDE SEQUENCE [MRNA]</scope>
    <scope>FUNCTION</scope>
    <scope>TRANSPORTER ACTIVITY</scope>
    <source>
        <strain>UAMH8232</strain>
    </source>
</reference>
<reference key="2">
    <citation type="journal article" date="2015" name="Plant Cell Environ.">
        <title>Laccaria bicolor aquaporin LbAQP1 is required for Hartig net development in trembling aspen (Populus tremuloides).</title>
        <authorList>
            <person name="Navarro-RoDenas A."/>
            <person name="Xu H."/>
            <person name="Kemppainen M."/>
            <person name="Pardo A.G."/>
            <person name="Zwiazek J.J."/>
        </authorList>
    </citation>
    <scope>FUNCTION</scope>
    <scope>TRANSPORTER ACTIVITY</scope>
    <scope>INDUCTION</scope>
    <scope>DISRUPTION PHENOTYPE</scope>
</reference>
<reference key="3">
    <citation type="journal article" date="2016" name="Mycorrhiza">
        <title>Transcript profiling of aquaporins during basidiocarp development in Laccaria bicolor ectomycorrhizal with Picea glauca.</title>
        <authorList>
            <person name="Xu H."/>
            <person name="Navarro-Rodenas A."/>
            <person name="Cooke J.E."/>
            <person name="Zwiazek J.J."/>
        </authorList>
    </citation>
    <scope>FUNCTION</scope>
    <scope>INDUCTION</scope>
</reference>
<accession>I1Z8E5</accession>
<keyword id="KW-1003">Cell membrane</keyword>
<keyword id="KW-0325">Glycoprotein</keyword>
<keyword id="KW-0472">Membrane</keyword>
<keyword id="KW-0677">Repeat</keyword>
<keyword id="KW-0812">Transmembrane</keyword>
<keyword id="KW-1133">Transmembrane helix</keyword>
<keyword id="KW-0813">Transport</keyword>
<gene>
    <name evidence="8" type="primary">AQP1</name>
</gene>
<name>AQP1_LACBI</name>
<feature type="chain" id="PRO_0000457448" description="Aquaporin-1">
    <location>
        <begin position="1"/>
        <end position="311"/>
    </location>
</feature>
<feature type="topological domain" description="Cytoplasmic" evidence="9">
    <location>
        <begin position="1"/>
        <end position="16"/>
    </location>
</feature>
<feature type="transmembrane region" description="Helical" evidence="2">
    <location>
        <begin position="17"/>
        <end position="37"/>
    </location>
</feature>
<feature type="topological domain" description="Extracellular" evidence="9">
    <location>
        <begin position="38"/>
        <end position="56"/>
    </location>
</feature>
<feature type="transmembrane region" description="Helical" evidence="2">
    <location>
        <begin position="57"/>
        <end position="77"/>
    </location>
</feature>
<feature type="topological domain" description="Cytoplasmic" evidence="9">
    <location>
        <position position="78"/>
    </location>
</feature>
<feature type="transmembrane region" description="Helical" evidence="2">
    <location>
        <begin position="79"/>
        <end position="99"/>
    </location>
</feature>
<feature type="topological domain" description="Extracellular" evidence="9">
    <location>
        <position position="100"/>
    </location>
</feature>
<feature type="transmembrane region" description="Helical" evidence="2">
    <location>
        <begin position="101"/>
        <end position="121"/>
    </location>
</feature>
<feature type="topological domain" description="Cytoplasmic" evidence="9">
    <location>
        <begin position="122"/>
        <end position="143"/>
    </location>
</feature>
<feature type="transmembrane region" description="Helical" evidence="2">
    <location>
        <begin position="144"/>
        <end position="164"/>
    </location>
</feature>
<feature type="topological domain" description="Extracellular" evidence="9">
    <location>
        <begin position="165"/>
        <end position="168"/>
    </location>
</feature>
<feature type="transmembrane region" description="Helical" evidence="2">
    <location>
        <begin position="169"/>
        <end position="189"/>
    </location>
</feature>
<feature type="topological domain" description="Cytoplasmic" evidence="9">
    <location>
        <begin position="190"/>
        <end position="215"/>
    </location>
</feature>
<feature type="transmembrane region" description="Helical" evidence="2">
    <location>
        <begin position="216"/>
        <end position="236"/>
    </location>
</feature>
<feature type="topological domain" description="Extracellular" evidence="9">
    <location>
        <begin position="237"/>
        <end position="311"/>
    </location>
</feature>
<feature type="region of interest" description="Disordered" evidence="4">
    <location>
        <begin position="276"/>
        <end position="311"/>
    </location>
</feature>
<feature type="short sequence motif" description="NPA 1" evidence="1">
    <location>
        <begin position="85"/>
        <end position="87"/>
    </location>
</feature>
<feature type="short sequence motif" description="NPA 2" evidence="1">
    <location>
        <begin position="197"/>
        <end position="199"/>
    </location>
</feature>
<feature type="compositionally biased region" description="Basic and acidic residues" evidence="4">
    <location>
        <begin position="288"/>
        <end position="298"/>
    </location>
</feature>
<feature type="compositionally biased region" description="Polar residues" evidence="4">
    <location>
        <begin position="299"/>
        <end position="311"/>
    </location>
</feature>
<feature type="glycosylation site" description="N-linked (GlcNAc...) asparagine" evidence="3">
    <location>
        <position position="300"/>
    </location>
</feature>
<sequence>MHPQVASLFDNVYEDLAAATLEFIGTAFFLLFGLGGIQASTAEDTASSQPPASGIEHVLYISTCMGFSLVVSAWLFFRVTGGLFNPNISFALLLVGGLKPLRFVLFCIAQLTGAIAGAAIVRGLTSAPLSVNNVLQQGTSAAQGVFIEMFITAALVLSVLMLAAEKHEATPFAPVGIGLTLFACHLFAVYYTGAAMNSARAFGPAVISGFPEPQHWVYWVGPFLGSLLGAGFYATLKHYKYWRLNPDQATSDYRKSPSDPVALLKSTAETFINVGDEETRNGCASNEEGVRATGDEKSSNATSSRTNFSPV</sequence>